<organism>
    <name type="scientific">Cryptococcus neoformans var. grubii serotype A (strain H99 / ATCC 208821 / CBS 10515 / FGSC 9487)</name>
    <name type="common">Filobasidiella neoformans var. grubii</name>
    <dbReference type="NCBI Taxonomy" id="235443"/>
    <lineage>
        <taxon>Eukaryota</taxon>
        <taxon>Fungi</taxon>
        <taxon>Dikarya</taxon>
        <taxon>Basidiomycota</taxon>
        <taxon>Agaricomycotina</taxon>
        <taxon>Tremellomycetes</taxon>
        <taxon>Tremellales</taxon>
        <taxon>Cryptococcaceae</taxon>
        <taxon>Cryptococcus</taxon>
        <taxon>Cryptococcus neoformans species complex</taxon>
    </lineage>
</organism>
<accession>P27710</accession>
<accession>J9VZN1</accession>
<protein>
    <recommendedName>
        <fullName>Multifunctional tryptophan biosynthesis protein</fullName>
    </recommendedName>
    <domain>
        <recommendedName>
            <fullName>Anthranilate synthase component 2</fullName>
            <shortName>AS</shortName>
            <ecNumber>4.1.3.27</ecNumber>
        </recommendedName>
        <alternativeName>
            <fullName>Anthranilate synthase, glutamine amidotransferase component</fullName>
        </alternativeName>
    </domain>
    <domain>
        <recommendedName>
            <fullName>Indole-3-glycerol phosphate synthase</fullName>
            <shortName>IGPS</shortName>
            <ecNumber>4.1.1.48</ecNumber>
        </recommendedName>
    </domain>
    <domain>
        <recommendedName>
            <fullName>N-(5'-phosphoribosyl)anthranilate isomerase</fullName>
            <shortName>PRAI</shortName>
            <ecNumber>5.3.1.24</ecNumber>
        </recommendedName>
    </domain>
</protein>
<proteinExistence type="inferred from homology"/>
<feature type="chain" id="PRO_0000056858" description="Multifunctional tryptophan biosynthesis protein">
    <location>
        <begin position="1"/>
        <end position="752"/>
    </location>
</feature>
<feature type="domain" description="Glutamine amidotransferase type-1">
    <location>
        <begin position="3"/>
        <end position="202"/>
    </location>
</feature>
<feature type="region of interest" description="Indole-3-glycerol phosphate synthase">
    <location>
        <begin position="231"/>
        <end position="495"/>
    </location>
</feature>
<feature type="region of interest" description="N-(5'-phosphoribosyl)anthranilate isomerase">
    <location>
        <begin position="509"/>
        <end position="752"/>
    </location>
</feature>
<feature type="active site" description="Nucleophile; for GATase activity" evidence="2">
    <location>
        <position position="86"/>
    </location>
</feature>
<feature type="active site" description="For GATase activity" evidence="1">
    <location>
        <position position="176"/>
    </location>
</feature>
<feature type="active site" description="For GATase activity" evidence="1">
    <location>
        <position position="178"/>
    </location>
</feature>
<feature type="binding site" evidence="2">
    <location>
        <begin position="58"/>
        <end position="60"/>
    </location>
    <ligand>
        <name>L-glutamine</name>
        <dbReference type="ChEBI" id="CHEBI:58359"/>
    </ligand>
</feature>
<feature type="binding site" evidence="2">
    <location>
        <begin position="136"/>
        <end position="137"/>
    </location>
    <ligand>
        <name>L-glutamine</name>
        <dbReference type="ChEBI" id="CHEBI:58359"/>
    </ligand>
</feature>
<feature type="sequence conflict" description="In Ref. 2." evidence="3" ref="2">
    <original>KGDIAPTASAPQQAL</original>
    <variation>FQGRNAPTLLLLRST</variation>
    <location>
        <begin position="295"/>
        <end position="309"/>
    </location>
</feature>
<feature type="sequence conflict" description="In Ref. 2; AAA51445." evidence="3" ref="2">
    <original>P</original>
    <variation>S</variation>
    <location>
        <position position="504"/>
    </location>
</feature>
<name>TRPG_CRYNH</name>
<dbReference type="EC" id="4.1.3.27"/>
<dbReference type="EC" id="4.1.1.48"/>
<dbReference type="EC" id="5.3.1.24"/>
<dbReference type="EMBL" id="CP003828">
    <property type="protein sequence ID" value="AFR97220.1"/>
    <property type="molecule type" value="Genomic_DNA"/>
</dbReference>
<dbReference type="EMBL" id="M74901">
    <property type="protein sequence ID" value="AAA51445.1"/>
    <property type="status" value="ALT_SEQ"/>
    <property type="molecule type" value="Genomic_DNA"/>
</dbReference>
<dbReference type="PIR" id="JN0451">
    <property type="entry name" value="JN0451"/>
</dbReference>
<dbReference type="RefSeq" id="XP_012051839.1">
    <property type="nucleotide sequence ID" value="XM_012196449.1"/>
</dbReference>
<dbReference type="SMR" id="P27710"/>
<dbReference type="GeneID" id="23887910"/>
<dbReference type="KEGG" id="cng:CNAG_04501"/>
<dbReference type="VEuPathDB" id="FungiDB:CNAG_04501"/>
<dbReference type="HOGENOM" id="CLU_007713_2_0_1"/>
<dbReference type="OrthoDB" id="3696at5206"/>
<dbReference type="UniPathway" id="UPA00035">
    <property type="reaction ID" value="UER00040"/>
</dbReference>
<dbReference type="UniPathway" id="UPA00035">
    <property type="reaction ID" value="UER00042"/>
</dbReference>
<dbReference type="UniPathway" id="UPA00035">
    <property type="reaction ID" value="UER00043"/>
</dbReference>
<dbReference type="Proteomes" id="UP000010091">
    <property type="component" value="Chromosome 9"/>
</dbReference>
<dbReference type="GO" id="GO:0004049">
    <property type="term" value="F:anthranilate synthase activity"/>
    <property type="evidence" value="ECO:0007669"/>
    <property type="project" value="UniProtKB-EC"/>
</dbReference>
<dbReference type="GO" id="GO:0004425">
    <property type="term" value="F:indole-3-glycerol-phosphate synthase activity"/>
    <property type="evidence" value="ECO:0007669"/>
    <property type="project" value="UniProtKB-EC"/>
</dbReference>
<dbReference type="GO" id="GO:0004640">
    <property type="term" value="F:phosphoribosylanthranilate isomerase activity"/>
    <property type="evidence" value="ECO:0007669"/>
    <property type="project" value="UniProtKB-EC"/>
</dbReference>
<dbReference type="GO" id="GO:0000162">
    <property type="term" value="P:L-tryptophan biosynthetic process"/>
    <property type="evidence" value="ECO:0007669"/>
    <property type="project" value="UniProtKB-UniPathway"/>
</dbReference>
<dbReference type="CDD" id="cd01743">
    <property type="entry name" value="GATase1_Anthranilate_Synthase"/>
    <property type="match status" value="1"/>
</dbReference>
<dbReference type="CDD" id="cd00331">
    <property type="entry name" value="IGPS"/>
    <property type="match status" value="1"/>
</dbReference>
<dbReference type="CDD" id="cd00405">
    <property type="entry name" value="PRAI"/>
    <property type="match status" value="1"/>
</dbReference>
<dbReference type="FunFam" id="3.20.20.70:FF:000136">
    <property type="entry name" value="Multifunctional tryptophan biosynthesis protein"/>
    <property type="match status" value="1"/>
</dbReference>
<dbReference type="FunFam" id="3.40.50.880:FF:000031">
    <property type="entry name" value="Multifunctional tryptophan biosynthesis protein"/>
    <property type="match status" value="1"/>
</dbReference>
<dbReference type="Gene3D" id="3.40.50.880">
    <property type="match status" value="1"/>
</dbReference>
<dbReference type="Gene3D" id="3.20.20.70">
    <property type="entry name" value="Aldolase class I"/>
    <property type="match status" value="2"/>
</dbReference>
<dbReference type="HAMAP" id="MF_00135">
    <property type="entry name" value="PRAI"/>
    <property type="match status" value="1"/>
</dbReference>
<dbReference type="InterPro" id="IPR013785">
    <property type="entry name" value="Aldolase_TIM"/>
</dbReference>
<dbReference type="InterPro" id="IPR016302">
    <property type="entry name" value="Anthranilate_synth_II"/>
</dbReference>
<dbReference type="InterPro" id="IPR029062">
    <property type="entry name" value="Class_I_gatase-like"/>
</dbReference>
<dbReference type="InterPro" id="IPR017926">
    <property type="entry name" value="GATASE"/>
</dbReference>
<dbReference type="InterPro" id="IPR045186">
    <property type="entry name" value="Indole-3-glycerol_P_synth"/>
</dbReference>
<dbReference type="InterPro" id="IPR013798">
    <property type="entry name" value="Indole-3-glycerol_P_synth_dom"/>
</dbReference>
<dbReference type="InterPro" id="IPR001468">
    <property type="entry name" value="Indole-3-GlycerolPSynthase_CS"/>
</dbReference>
<dbReference type="InterPro" id="IPR001240">
    <property type="entry name" value="PRAI_dom"/>
</dbReference>
<dbReference type="InterPro" id="IPR011060">
    <property type="entry name" value="RibuloseP-bd_barrel"/>
</dbReference>
<dbReference type="InterPro" id="IPR006221">
    <property type="entry name" value="TrpG/PapA_dom"/>
</dbReference>
<dbReference type="NCBIfam" id="TIGR00566">
    <property type="entry name" value="trpG_papA"/>
    <property type="match status" value="1"/>
</dbReference>
<dbReference type="PANTHER" id="PTHR22854:SF2">
    <property type="entry name" value="INDOLE-3-GLYCEROL-PHOSPHATE SYNTHASE"/>
    <property type="match status" value="1"/>
</dbReference>
<dbReference type="PANTHER" id="PTHR22854">
    <property type="entry name" value="TRYPTOPHAN BIOSYNTHESIS PROTEIN"/>
    <property type="match status" value="1"/>
</dbReference>
<dbReference type="Pfam" id="PF00117">
    <property type="entry name" value="GATase"/>
    <property type="match status" value="1"/>
</dbReference>
<dbReference type="Pfam" id="PF00218">
    <property type="entry name" value="IGPS"/>
    <property type="match status" value="1"/>
</dbReference>
<dbReference type="Pfam" id="PF00697">
    <property type="entry name" value="PRAI"/>
    <property type="match status" value="1"/>
</dbReference>
<dbReference type="PIRSF" id="PIRSF001382">
    <property type="entry name" value="TrpG-trpC-trpF"/>
    <property type="match status" value="1"/>
</dbReference>
<dbReference type="PRINTS" id="PR00097">
    <property type="entry name" value="ANTSNTHASEII"/>
</dbReference>
<dbReference type="PRINTS" id="PR00096">
    <property type="entry name" value="GATASE"/>
</dbReference>
<dbReference type="SUPFAM" id="SSF52317">
    <property type="entry name" value="Class I glutamine amidotransferase-like"/>
    <property type="match status" value="1"/>
</dbReference>
<dbReference type="SUPFAM" id="SSF51366">
    <property type="entry name" value="Ribulose-phoshate binding barrel"/>
    <property type="match status" value="2"/>
</dbReference>
<dbReference type="PROSITE" id="PS51273">
    <property type="entry name" value="GATASE_TYPE_1"/>
    <property type="match status" value="1"/>
</dbReference>
<dbReference type="PROSITE" id="PS00614">
    <property type="entry name" value="IGPS"/>
    <property type="match status" value="1"/>
</dbReference>
<sequence>MGFTLLIDNYDSFTWNIYADLASVGGNPFVVRNDKITLKEIEGMFADGELERIVISPGPGHPRTDSGVSRDVIAWGMGKLPILGVCMGLECIVDLLGGEIAYAGEIKHGKTSLVQHDSIGVFHNLPQFLSSTRYHSLSAQIQSLPSVLQVTSTTKESGVIMGVRHRTFTVEAVQYHPESCMSEGGRGLMANFIQMKGGKWGGENAWCGVPAEGEGEQPKAKTNGAPSLPTILNKIHAQRLLDVEQAEKIPATTPANVSTSLSLYTSPPLINFRGRMVSTPHTAVMAEIKRASPSKGDIAPTASAPQQALKYALAGASVISVLTEPTWFKGSLLDMLAVRNAVDSLPNRPAILRKDFVLSKYMIDEARLYGADTVLLIVAMLEPQQLKELYDYSVSLGMEPLVEVNNPTELSLALEIGSKVIGVNNRNLHDFNVDMSTTSRVNAALNGRDVVLCALSGISSHEDVEKYVKEGVKGVLVGEALMRASDTKAFLRSLIGLPPLEVVPKPRPLVKICGIRSTNDAKLAINAGADLLGVILVPGTKRCISTSTAREISALVQSARSQSSSKPLEPSLSSPWFTSQSALLSSRRKPLLVGVFQNQSLSDILSAVDEIGLDLVQLHGDEPQAWAKFIPVPVVKVFRVSPEGIVRGGEIRRPGLNQAILLDAGGASGGGGEGKAFPWEHAKRLIQSGEVGSEGHVPLPVILAGGLTPENVGQAIEQAGEGVWCVDVSSGVEGEGGKVKEKVEAFVKAVRG</sequence>
<evidence type="ECO:0000250" key="1"/>
<evidence type="ECO:0000250" key="2">
    <source>
        <dbReference type="UniProtKB" id="P00900"/>
    </source>
</evidence>
<evidence type="ECO:0000305" key="3"/>
<reference key="1">
    <citation type="journal article" date="2014" name="PLoS Genet.">
        <title>Analysis of the genome and transcriptome of Cryptococcus neoformans var. grubii reveals complex RNA expression and microevolution leading to virulence attenuation.</title>
        <authorList>
            <person name="Janbon G."/>
            <person name="Ormerod K.L."/>
            <person name="Paulet D."/>
            <person name="Byrnes E.J. III"/>
            <person name="Yadav V."/>
            <person name="Chatterjee G."/>
            <person name="Mullapudi N."/>
            <person name="Hon C.-C."/>
            <person name="Billmyre R.B."/>
            <person name="Brunel F."/>
            <person name="Bahn Y.-S."/>
            <person name="Chen W."/>
            <person name="Chen Y."/>
            <person name="Chow E.W.L."/>
            <person name="Coppee J.-Y."/>
            <person name="Floyd-Averette A."/>
            <person name="Gaillardin C."/>
            <person name="Gerik K.J."/>
            <person name="Goldberg J."/>
            <person name="Gonzalez-Hilarion S."/>
            <person name="Gujja S."/>
            <person name="Hamlin J.L."/>
            <person name="Hsueh Y.-P."/>
            <person name="Ianiri G."/>
            <person name="Jones S."/>
            <person name="Kodira C.D."/>
            <person name="Kozubowski L."/>
            <person name="Lam W."/>
            <person name="Marra M."/>
            <person name="Mesner L.D."/>
            <person name="Mieczkowski P.A."/>
            <person name="Moyrand F."/>
            <person name="Nielsen K."/>
            <person name="Proux C."/>
            <person name="Rossignol T."/>
            <person name="Schein J.E."/>
            <person name="Sun S."/>
            <person name="Wollschlaeger C."/>
            <person name="Wood I.A."/>
            <person name="Zeng Q."/>
            <person name="Neuveglise C."/>
            <person name="Newlon C.S."/>
            <person name="Perfect J.R."/>
            <person name="Lodge J.K."/>
            <person name="Idnurm A."/>
            <person name="Stajich J.E."/>
            <person name="Kronstad J.W."/>
            <person name="Sanyal K."/>
            <person name="Heitman J."/>
            <person name="Fraser J.A."/>
            <person name="Cuomo C.A."/>
            <person name="Dietrich F.S."/>
        </authorList>
    </citation>
    <scope>NUCLEOTIDE SEQUENCE [LARGE SCALE GENOMIC DNA]</scope>
    <source>
        <strain>H99 / ATCC 208821 / CBS 10515 / FGSC 9487</strain>
    </source>
</reference>
<reference key="2">
    <citation type="journal article" date="1992" name="Gene">
        <title>Cloning the Cryptococcus neoformans TRP1 gene by complementation in Saccharomyces cerevisiae.</title>
        <authorList>
            <person name="Perfect J.R."/>
            <person name="Rude T.H."/>
            <person name="Penning L.M."/>
            <person name="Johnston S.A."/>
        </authorList>
    </citation>
    <scope>NUCLEOTIDE SEQUENCE [GENOMIC DNA] OF 294-752</scope>
</reference>
<comment type="function">
    <text>Trifunctional enzyme bearing the Gln amidotransferase (GATase) domain of anthranilate synthase, indole-glycerolphosphate synthase, and phosphoribosylanthranilate isomerase activities.</text>
</comment>
<comment type="catalytic activity">
    <reaction>
        <text>N-(5-phospho-beta-D-ribosyl)anthranilate = 1-(2-carboxyphenylamino)-1-deoxy-D-ribulose 5-phosphate</text>
        <dbReference type="Rhea" id="RHEA:21540"/>
        <dbReference type="ChEBI" id="CHEBI:18277"/>
        <dbReference type="ChEBI" id="CHEBI:58613"/>
        <dbReference type="EC" id="5.3.1.24"/>
    </reaction>
</comment>
<comment type="catalytic activity">
    <reaction>
        <text>1-(2-carboxyphenylamino)-1-deoxy-D-ribulose 5-phosphate + H(+) = (1S,2R)-1-C-(indol-3-yl)glycerol 3-phosphate + CO2 + H2O</text>
        <dbReference type="Rhea" id="RHEA:23476"/>
        <dbReference type="ChEBI" id="CHEBI:15377"/>
        <dbReference type="ChEBI" id="CHEBI:15378"/>
        <dbReference type="ChEBI" id="CHEBI:16526"/>
        <dbReference type="ChEBI" id="CHEBI:58613"/>
        <dbReference type="ChEBI" id="CHEBI:58866"/>
        <dbReference type="EC" id="4.1.1.48"/>
    </reaction>
</comment>
<comment type="catalytic activity">
    <reaction>
        <text>chorismate + L-glutamine = anthranilate + pyruvate + L-glutamate + H(+)</text>
        <dbReference type="Rhea" id="RHEA:21732"/>
        <dbReference type="ChEBI" id="CHEBI:15361"/>
        <dbReference type="ChEBI" id="CHEBI:15378"/>
        <dbReference type="ChEBI" id="CHEBI:16567"/>
        <dbReference type="ChEBI" id="CHEBI:29748"/>
        <dbReference type="ChEBI" id="CHEBI:29985"/>
        <dbReference type="ChEBI" id="CHEBI:58359"/>
        <dbReference type="EC" id="4.1.3.27"/>
    </reaction>
</comment>
<comment type="pathway">
    <text>Amino-acid biosynthesis; L-tryptophan biosynthesis; L-tryptophan from chorismate: step 1/5.</text>
</comment>
<comment type="pathway">
    <text>Amino-acid biosynthesis; L-tryptophan biosynthesis; L-tryptophan from chorismate: step 3/5.</text>
</comment>
<comment type="pathway">
    <text>Amino-acid biosynthesis; L-tryptophan biosynthesis; L-tryptophan from chorismate: step 4/5.</text>
</comment>
<comment type="sequence caution" evidence="3">
    <conflict type="erroneous termination">
        <sequence resource="EMBL-CDS" id="AAA51445"/>
    </conflict>
    <text>Truncated C-terminus.</text>
</comment>
<comment type="sequence caution" evidence="3">
    <conflict type="frameshift">
        <sequence resource="EMBL-CDS" id="AAA51445"/>
    </conflict>
</comment>
<gene>
    <name type="primary">TRP1</name>
    <name type="ORF">CNAG_04501</name>
</gene>
<keyword id="KW-0028">Amino-acid biosynthesis</keyword>
<keyword id="KW-0057">Aromatic amino acid biosynthesis</keyword>
<keyword id="KW-0210">Decarboxylase</keyword>
<keyword id="KW-0315">Glutamine amidotransferase</keyword>
<keyword id="KW-0413">Isomerase</keyword>
<keyword id="KW-0456">Lyase</keyword>
<keyword id="KW-0511">Multifunctional enzyme</keyword>
<keyword id="KW-0822">Tryptophan biosynthesis</keyword>